<feature type="chain" id="PRO_0000204383" description="5'-AMP-activated protein kinase subunit gamma-2">
    <location>
        <begin position="1"/>
        <end position="524"/>
    </location>
</feature>
<feature type="domain" description="CBS 1" evidence="5">
    <location>
        <begin position="230"/>
        <end position="290"/>
    </location>
</feature>
<feature type="domain" description="CBS 2" evidence="5">
    <location>
        <begin position="312"/>
        <end position="370"/>
    </location>
</feature>
<feature type="domain" description="CBS 3" evidence="5">
    <location>
        <begin position="385"/>
        <end position="447"/>
    </location>
</feature>
<feature type="domain" description="CBS 4" evidence="5">
    <location>
        <begin position="459"/>
        <end position="517"/>
    </location>
</feature>
<feature type="region of interest" description="Disordered" evidence="6">
    <location>
        <begin position="1"/>
        <end position="178"/>
    </location>
</feature>
<feature type="short sequence motif" description="AMPK pseudosubstrate">
    <location>
        <begin position="325"/>
        <end position="346"/>
    </location>
</feature>
<feature type="compositionally biased region" description="Low complexity" evidence="6">
    <location>
        <begin position="112"/>
        <end position="123"/>
    </location>
</feature>
<feature type="compositionally biased region" description="Basic and acidic residues" evidence="6">
    <location>
        <begin position="135"/>
        <end position="145"/>
    </location>
</feature>
<feature type="compositionally biased region" description="Polar residues" evidence="6">
    <location>
        <begin position="148"/>
        <end position="168"/>
    </location>
</feature>
<feature type="binding site" evidence="2">
    <location>
        <position position="257"/>
    </location>
    <ligand>
        <name>ADP</name>
        <dbReference type="ChEBI" id="CHEBI:456216"/>
        <label>2</label>
    </ligand>
</feature>
<feature type="binding site" evidence="2">
    <location>
        <position position="257"/>
    </location>
    <ligand>
        <name>AMP</name>
        <dbReference type="ChEBI" id="CHEBI:456215"/>
        <label>2</label>
    </ligand>
</feature>
<feature type="binding site" evidence="2">
    <location>
        <position position="257"/>
    </location>
    <ligand>
        <name>ATP</name>
        <dbReference type="ChEBI" id="CHEBI:30616"/>
        <label>1</label>
    </ligand>
</feature>
<feature type="binding site" evidence="2">
    <location>
        <position position="257"/>
    </location>
    <ligand>
        <name>ATP</name>
        <dbReference type="ChEBI" id="CHEBI:30616"/>
        <label>2</label>
    </ligand>
</feature>
<feature type="binding site" evidence="2">
    <location>
        <begin position="272"/>
        <end position="277"/>
    </location>
    <ligand>
        <name>ADP</name>
        <dbReference type="ChEBI" id="CHEBI:456216"/>
        <label>1</label>
    </ligand>
</feature>
<feature type="binding site" evidence="2">
    <location>
        <begin position="272"/>
        <end position="277"/>
    </location>
    <ligand>
        <name>AMP</name>
        <dbReference type="ChEBI" id="CHEBI:456215"/>
        <label>1</label>
    </ligand>
</feature>
<feature type="binding site" evidence="2">
    <location>
        <begin position="272"/>
        <end position="277"/>
    </location>
    <ligand>
        <name>ATP</name>
        <dbReference type="ChEBI" id="CHEBI:30616"/>
        <label>1</label>
    </ligand>
</feature>
<feature type="binding site" evidence="2">
    <location>
        <position position="317"/>
    </location>
    <ligand>
        <name>ADP</name>
        <dbReference type="ChEBI" id="CHEBI:456216"/>
        <label>1</label>
    </ligand>
</feature>
<feature type="binding site" evidence="2">
    <location>
        <position position="317"/>
    </location>
    <ligand>
        <name>AMP</name>
        <dbReference type="ChEBI" id="CHEBI:456215"/>
        <label>1</label>
    </ligand>
</feature>
<feature type="binding site" evidence="2">
    <location>
        <position position="317"/>
    </location>
    <ligand>
        <name>ATP</name>
        <dbReference type="ChEBI" id="CHEBI:30616"/>
        <label>1</label>
    </ligand>
</feature>
<feature type="binding site" evidence="2">
    <location>
        <begin position="338"/>
        <end position="339"/>
    </location>
    <ligand>
        <name>ADP</name>
        <dbReference type="ChEBI" id="CHEBI:456216"/>
        <label>1</label>
    </ligand>
</feature>
<feature type="binding site" evidence="2">
    <location>
        <begin position="338"/>
        <end position="339"/>
    </location>
    <ligand>
        <name>AMP</name>
        <dbReference type="ChEBI" id="CHEBI:456215"/>
        <label>1</label>
    </ligand>
</feature>
<feature type="binding site" evidence="2">
    <location>
        <begin position="338"/>
        <end position="339"/>
    </location>
    <ligand>
        <name>ATP</name>
        <dbReference type="ChEBI" id="CHEBI:30616"/>
        <label>1</label>
    </ligand>
</feature>
<feature type="binding site" evidence="2">
    <location>
        <position position="338"/>
    </location>
    <ligand>
        <name>AMP</name>
        <dbReference type="ChEBI" id="CHEBI:456215"/>
        <label>3</label>
    </ligand>
</feature>
<feature type="binding site" evidence="2">
    <location>
        <position position="339"/>
    </location>
    <ligand>
        <name>ATP</name>
        <dbReference type="ChEBI" id="CHEBI:30616"/>
        <label>2</label>
    </ligand>
</feature>
<feature type="binding site" evidence="2">
    <location>
        <position position="357"/>
    </location>
    <ligand>
        <name>ADP</name>
        <dbReference type="ChEBI" id="CHEBI:456216"/>
        <label>2</label>
    </ligand>
</feature>
<feature type="binding site" evidence="2">
    <location>
        <position position="357"/>
    </location>
    <ligand>
        <name>AMP</name>
        <dbReference type="ChEBI" id="CHEBI:456215"/>
        <label>2</label>
    </ligand>
</feature>
<feature type="binding site" evidence="2">
    <location>
        <position position="357"/>
    </location>
    <ligand>
        <name>ATP</name>
        <dbReference type="ChEBI" id="CHEBI:30616"/>
        <label>2</label>
    </ligand>
</feature>
<feature type="binding site" evidence="2">
    <location>
        <position position="387"/>
    </location>
    <ligand>
        <name>AMP</name>
        <dbReference type="ChEBI" id="CHEBI:456215"/>
        <label>3</label>
    </ligand>
</feature>
<feature type="binding site" evidence="2">
    <location>
        <position position="392"/>
    </location>
    <ligand>
        <name>AMP</name>
        <dbReference type="ChEBI" id="CHEBI:456215"/>
        <label>3</label>
    </ligand>
</feature>
<feature type="binding site" evidence="2">
    <location>
        <begin position="413"/>
        <end position="414"/>
    </location>
    <ligand>
        <name>AMP</name>
        <dbReference type="ChEBI" id="CHEBI:456215"/>
        <label>3</label>
    </ligand>
</feature>
<feature type="binding site" evidence="2">
    <location>
        <begin position="429"/>
        <end position="432"/>
    </location>
    <ligand>
        <name>ADP</name>
        <dbReference type="ChEBI" id="CHEBI:456216"/>
        <label>2</label>
    </ligand>
</feature>
<feature type="binding site" evidence="2">
    <location>
        <begin position="429"/>
        <end position="432"/>
    </location>
    <ligand>
        <name>AMP</name>
        <dbReference type="ChEBI" id="CHEBI:456215"/>
        <label>2</label>
    </ligand>
</feature>
<feature type="binding site" evidence="2">
    <location>
        <begin position="429"/>
        <end position="432"/>
    </location>
    <ligand>
        <name>ATP</name>
        <dbReference type="ChEBI" id="CHEBI:30616"/>
        <label>2</label>
    </ligand>
</feature>
<feature type="binding site" evidence="2">
    <location>
        <position position="456"/>
    </location>
    <ligand>
        <name>ADP</name>
        <dbReference type="ChEBI" id="CHEBI:456216"/>
        <label>2</label>
    </ligand>
</feature>
<feature type="binding site" evidence="2">
    <location>
        <position position="456"/>
    </location>
    <ligand>
        <name>AMP</name>
        <dbReference type="ChEBI" id="CHEBI:456215"/>
        <label>2</label>
    </ligand>
</feature>
<feature type="binding site" evidence="2">
    <location>
        <position position="456"/>
    </location>
    <ligand>
        <name>ATP</name>
        <dbReference type="ChEBI" id="CHEBI:30616"/>
        <label>2</label>
    </ligand>
</feature>
<feature type="binding site" evidence="2">
    <location>
        <begin position="485"/>
        <end position="486"/>
    </location>
    <ligand>
        <name>ADP</name>
        <dbReference type="ChEBI" id="CHEBI:456216"/>
        <label>2</label>
    </ligand>
</feature>
<feature type="binding site" evidence="2">
    <location>
        <begin position="485"/>
        <end position="486"/>
    </location>
    <ligand>
        <name>AMP</name>
        <dbReference type="ChEBI" id="CHEBI:456215"/>
        <label>2</label>
    </ligand>
</feature>
<feature type="binding site" evidence="2">
    <location>
        <begin position="485"/>
        <end position="486"/>
    </location>
    <ligand>
        <name>ATP</name>
        <dbReference type="ChEBI" id="CHEBI:30616"/>
        <label>2</label>
    </ligand>
</feature>
<feature type="binding site" evidence="2">
    <location>
        <position position="485"/>
    </location>
    <ligand>
        <name>AMP</name>
        <dbReference type="ChEBI" id="CHEBI:456215"/>
        <label>3</label>
    </ligand>
</feature>
<feature type="binding site" evidence="2">
    <location>
        <begin position="501"/>
        <end position="504"/>
    </location>
    <ligand>
        <name>AMP</name>
        <dbReference type="ChEBI" id="CHEBI:456215"/>
        <label>3</label>
    </ligand>
</feature>
<feature type="modified residue" description="Phosphoserine" evidence="3">
    <location>
        <position position="21"/>
    </location>
</feature>
<feature type="modified residue" description="Phosphoserine" evidence="4">
    <location>
        <position position="27"/>
    </location>
</feature>
<feature type="modified residue" description="Phosphoserine" evidence="3">
    <location>
        <position position="29"/>
    </location>
</feature>
<feature type="modified residue" description="Phosphoserine" evidence="3">
    <location>
        <position position="46"/>
    </location>
</feature>
<feature type="modified residue" description="Phosphoserine" evidence="3">
    <location>
        <position position="94"/>
    </location>
</feature>
<feature type="modified residue" description="Phosphoserine" evidence="3">
    <location>
        <position position="99"/>
    </location>
</feature>
<feature type="modified residue" description="Phosphoserine" evidence="3">
    <location>
        <position position="117"/>
    </location>
</feature>
<feature type="modified residue" description="Phosphoserine" evidence="3">
    <location>
        <position position="118"/>
    </location>
</feature>
<feature type="modified residue" description="Phosphothreonine" evidence="3">
    <location>
        <position position="121"/>
    </location>
</feature>
<feature type="modified residue" description="Phosphoserine" evidence="3">
    <location>
        <position position="152"/>
    </location>
</feature>
<evidence type="ECO:0000250" key="1"/>
<evidence type="ECO:0000250" key="2">
    <source>
        <dbReference type="UniProtKB" id="P80385"/>
    </source>
</evidence>
<evidence type="ECO:0000250" key="3">
    <source>
        <dbReference type="UniProtKB" id="Q91WG5"/>
    </source>
</evidence>
<evidence type="ECO:0000250" key="4">
    <source>
        <dbReference type="UniProtKB" id="Q9UGJ0"/>
    </source>
</evidence>
<evidence type="ECO:0000255" key="5">
    <source>
        <dbReference type="PROSITE-ProRule" id="PRU00703"/>
    </source>
</evidence>
<evidence type="ECO:0000256" key="6">
    <source>
        <dbReference type="SAM" id="MobiDB-lite"/>
    </source>
</evidence>
<evidence type="ECO:0000305" key="7"/>
<gene>
    <name type="primary">PRKAG2</name>
</gene>
<comment type="function">
    <text evidence="4">AMP/ATP-binding subunit of AMP-activated protein kinase (AMPK), an energy sensor protein kinase that plays a key role in regulating cellular energy metabolism. In response to reduction of intracellular ATP levels, AMPK activates energy-producing pathways and inhibits energy-consuming processes: inhibits protein, carbohydrate and lipid biosynthesis, as well as cell growth and proliferation. AMPK acts via direct phosphorylation of metabolic enzymes, and by longer-term effects via phosphorylation of transcription regulators. Also acts as a regulator of cellular polarity by remodeling the actin cytoskeleton; probably by indirectly activating myosin. Gamma non-catalytic subunit mediates binding to AMP, ADP and ATP, leading to activate or inhibit AMPK: AMP-binding results in allosteric activation of alpha catalytic subunit (PRKAA1 or PRKAA2) both by inducing phosphorylation and preventing dephosphorylation of catalytic subunits. ADP also stimulates phosphorylation, without stimulating already phosphorylated catalytic subunit. ATP promotes dephosphorylation of catalytic subunit, rendering the AMPK enzyme inactive.</text>
</comment>
<comment type="subunit">
    <text evidence="1">AMPK is a heterotrimer of an alpha catalytic subunit (PRKAA1 or PRKAA2), a beta (PRKAB1 or PRKAB2) and a gamma non-catalytic subunits (PRKAG1, PRKAG2 or PRKAG3). Interacts with FNIP1 and FNIP2 (By similarity).</text>
</comment>
<comment type="domain">
    <text evidence="1">The AMPK pseudosubstrate motif resembles the sequence around sites phosphorylated on target proteins of AMPK, except the presence of a non-phosphorylatable residue in place of Ser. In the absence of AMP this pseudosubstrate sequence may bind to the active site groove on the alpha subunit (PRKAA1 or PRKAA2), preventing phosphorylation by the upstream activating kinase STK11/LKB1 (By similarity).</text>
</comment>
<comment type="domain">
    <text evidence="2">The 4 CBS domains mediate binding to nucleotides. Of the 4 potential nucleotide-binding sites, 3 are occupied, designated as sites 1, 3, and 4 based on the CBS modules that provide the acidic residue for coordination with the 2'- and 3'-hydroxyl groups of the ribose of AMP. Of these, site 4 appears to be a structural site that retains a tightly held AMP molecule (AMP 3). The 2 remaining sites, 1 and 3, can bind either AMP, ADP or ATP. Site 1 (AMP, ADP or ATP 1) is the high-affinity binding site and likely accommodates AMP or ADP. Site 3 (AMP, ADP or ATP 2) is the weakest nucleotide-binding site on the gamma subunit, yet it is exquisitely sensitive to changes in nucleotide levels and this allows AMPK to respond rapidly to changes in cellular energy status. Site 3 is likely to be responsible for protection of a conserved threonine in the activation loop of the alpha catalytic subunit through conformational changes induced by binding of AMP or ADP.</text>
</comment>
<comment type="PTM">
    <text>Phosphorylated by ULK1; leading to negatively regulate AMPK activity and suggesting the existence of a regulatory feedback loop between ULK1 and AMPK.</text>
</comment>
<comment type="PTM">
    <text evidence="4">Glycosylated; O-GlcNAcylated by OGT, promoting the AMP-activated protein kinase (AMPK) activity.</text>
</comment>
<comment type="similarity">
    <text evidence="7">Belongs to the 5'-AMP-activated protein kinase gamma subunit family.</text>
</comment>
<name>AAKG2_PONAB</name>
<protein>
    <recommendedName>
        <fullName>5'-AMP-activated protein kinase subunit gamma-2</fullName>
        <shortName>AMPK gamma2</shortName>
        <shortName>AMPK subunit gamma-2</shortName>
    </recommendedName>
</protein>
<dbReference type="EMBL" id="CR861174">
    <property type="protein sequence ID" value="CAH93246.1"/>
    <property type="molecule type" value="mRNA"/>
</dbReference>
<dbReference type="RefSeq" id="NP_001126909.1">
    <property type="nucleotide sequence ID" value="NM_001133437.1"/>
</dbReference>
<dbReference type="SMR" id="Q5R4S0"/>
<dbReference type="STRING" id="9601.ENSPPYP00000020405"/>
<dbReference type="GeneID" id="100173926"/>
<dbReference type="KEGG" id="pon:100173926"/>
<dbReference type="CTD" id="51422"/>
<dbReference type="eggNOG" id="KOG1764">
    <property type="taxonomic scope" value="Eukaryota"/>
</dbReference>
<dbReference type="InParanoid" id="Q5R4S0"/>
<dbReference type="OrthoDB" id="449052at2759"/>
<dbReference type="Proteomes" id="UP000001595">
    <property type="component" value="Unplaced"/>
</dbReference>
<dbReference type="GO" id="GO:0005829">
    <property type="term" value="C:cytosol"/>
    <property type="evidence" value="ECO:0007669"/>
    <property type="project" value="UniProtKB-ARBA"/>
</dbReference>
<dbReference type="GO" id="GO:0031588">
    <property type="term" value="C:nucleotide-activated protein kinase complex"/>
    <property type="evidence" value="ECO:0007669"/>
    <property type="project" value="TreeGrafter"/>
</dbReference>
<dbReference type="GO" id="GO:0005634">
    <property type="term" value="C:nucleus"/>
    <property type="evidence" value="ECO:0007669"/>
    <property type="project" value="TreeGrafter"/>
</dbReference>
<dbReference type="GO" id="GO:0016208">
    <property type="term" value="F:AMP binding"/>
    <property type="evidence" value="ECO:0007669"/>
    <property type="project" value="TreeGrafter"/>
</dbReference>
<dbReference type="GO" id="GO:0005524">
    <property type="term" value="F:ATP binding"/>
    <property type="evidence" value="ECO:0007669"/>
    <property type="project" value="UniProtKB-KW"/>
</dbReference>
<dbReference type="GO" id="GO:0019901">
    <property type="term" value="F:protein kinase binding"/>
    <property type="evidence" value="ECO:0007669"/>
    <property type="project" value="TreeGrafter"/>
</dbReference>
<dbReference type="GO" id="GO:0019887">
    <property type="term" value="F:protein kinase regulator activity"/>
    <property type="evidence" value="ECO:0000250"/>
    <property type="project" value="UniProtKB"/>
</dbReference>
<dbReference type="GO" id="GO:0006633">
    <property type="term" value="P:fatty acid biosynthetic process"/>
    <property type="evidence" value="ECO:0007669"/>
    <property type="project" value="UniProtKB-KW"/>
</dbReference>
<dbReference type="CDD" id="cd04618">
    <property type="entry name" value="CBS_euAMPK_gamma-like_repeat1"/>
    <property type="match status" value="1"/>
</dbReference>
<dbReference type="CDD" id="cd04641">
    <property type="entry name" value="CBS_euAMPK_gamma-like_repeat2"/>
    <property type="match status" value="1"/>
</dbReference>
<dbReference type="FunFam" id="3.10.580.10:FF:000003">
    <property type="entry name" value="Protein kinase AMP-activated non-catalytic subunit gamma 1"/>
    <property type="match status" value="1"/>
</dbReference>
<dbReference type="FunFam" id="3.10.580.10:FF:000004">
    <property type="entry name" value="Protein kinase AMP-activated non-catalytic subunit gamma 2"/>
    <property type="match status" value="1"/>
</dbReference>
<dbReference type="Gene3D" id="3.10.580.10">
    <property type="entry name" value="CBS-domain"/>
    <property type="match status" value="2"/>
</dbReference>
<dbReference type="InterPro" id="IPR050511">
    <property type="entry name" value="AMPK_gamma/SDS23_families"/>
</dbReference>
<dbReference type="InterPro" id="IPR000644">
    <property type="entry name" value="CBS_dom"/>
</dbReference>
<dbReference type="InterPro" id="IPR046342">
    <property type="entry name" value="CBS_dom_sf"/>
</dbReference>
<dbReference type="PANTHER" id="PTHR13780:SF122">
    <property type="entry name" value="5'-AMP-ACTIVATED PROTEIN KINASE SUBUNIT GAMMA-2"/>
    <property type="match status" value="1"/>
</dbReference>
<dbReference type="PANTHER" id="PTHR13780">
    <property type="entry name" value="AMP-ACTIVATED PROTEIN KINASE, GAMMA REGULATORY SUBUNIT"/>
    <property type="match status" value="1"/>
</dbReference>
<dbReference type="Pfam" id="PF00571">
    <property type="entry name" value="CBS"/>
    <property type="match status" value="4"/>
</dbReference>
<dbReference type="SMART" id="SM00116">
    <property type="entry name" value="CBS"/>
    <property type="match status" value="4"/>
</dbReference>
<dbReference type="SUPFAM" id="SSF54631">
    <property type="entry name" value="CBS-domain pair"/>
    <property type="match status" value="2"/>
</dbReference>
<dbReference type="PROSITE" id="PS51371">
    <property type="entry name" value="CBS"/>
    <property type="match status" value="4"/>
</dbReference>
<accession>Q5R4S0</accession>
<sequence>MPLLDGDLEGSGKHSSRKVDSPFGPGSPSKGFFSRGPQPRPPSPMSAPVRPKTSPGSPKTVFPFSYQESPPRSPRRMSFSGIFRSSSKESSPNSNPATSPGGIRFFSRSRKTSGLSSSPSTPTQVTKQHTFPLESYKHEPERLENRIYASSSPPDTGQRFCPSSFQSPTRPPLASPTHYAPSKAAALAAALGPAEAGMLEKLEFEDEVEDSESGVYMRFMRSHKCYDIVPTSSKLVVFDTTLQVKKAFFALVANGVRAAPLWESKKQSFVGMLTITDFINILHRYYKSPMVQIYELEEHKIETWRELYLQETFKPLVNISPDASLLDAVYSLIKNKIHRLPVIDPISGNALYILTHKRILKFLQLFMSDMPKPAFMKQNLDELGIGTYHNIAFIHPDTPIIKALNIFVERRISALPVVDESGKVVDIYSKFDVINLAAEKTYNNLDITVTQALQHRSQYFEGVVKCNKLEILETIVDRIVRAEVHRLVVANEADSIVGIISLSDILQALILTPAGAKQKETETE</sequence>
<keyword id="KW-0067">ATP-binding</keyword>
<keyword id="KW-0129">CBS domain</keyword>
<keyword id="KW-0275">Fatty acid biosynthesis</keyword>
<keyword id="KW-0276">Fatty acid metabolism</keyword>
<keyword id="KW-0325">Glycoprotein</keyword>
<keyword id="KW-0444">Lipid biosynthesis</keyword>
<keyword id="KW-0443">Lipid metabolism</keyword>
<keyword id="KW-0547">Nucleotide-binding</keyword>
<keyword id="KW-0597">Phosphoprotein</keyword>
<keyword id="KW-1185">Reference proteome</keyword>
<keyword id="KW-0677">Repeat</keyword>
<proteinExistence type="evidence at transcript level"/>
<reference key="1">
    <citation type="submission" date="2004-11" db="EMBL/GenBank/DDBJ databases">
        <authorList>
            <consortium name="The German cDNA consortium"/>
        </authorList>
    </citation>
    <scope>NUCLEOTIDE SEQUENCE [LARGE SCALE MRNA]</scope>
    <source>
        <tissue>Brain cortex</tissue>
    </source>
</reference>
<organism>
    <name type="scientific">Pongo abelii</name>
    <name type="common">Sumatran orangutan</name>
    <name type="synonym">Pongo pygmaeus abelii</name>
    <dbReference type="NCBI Taxonomy" id="9601"/>
    <lineage>
        <taxon>Eukaryota</taxon>
        <taxon>Metazoa</taxon>
        <taxon>Chordata</taxon>
        <taxon>Craniata</taxon>
        <taxon>Vertebrata</taxon>
        <taxon>Euteleostomi</taxon>
        <taxon>Mammalia</taxon>
        <taxon>Eutheria</taxon>
        <taxon>Euarchontoglires</taxon>
        <taxon>Primates</taxon>
        <taxon>Haplorrhini</taxon>
        <taxon>Catarrhini</taxon>
        <taxon>Hominidae</taxon>
        <taxon>Pongo</taxon>
    </lineage>
</organism>